<protein>
    <recommendedName>
        <fullName>Mediator of RNA polymerase II transcription subunit 17</fullName>
    </recommendedName>
    <alternativeName>
        <fullName>Cofactor required for Sp1 transcriptional activation subunit 6</fullName>
        <shortName>CRSP complex subunit 6</shortName>
    </alternativeName>
    <alternativeName>
        <fullName>Mediator complex subunit 17</fullName>
    </alternativeName>
</protein>
<organism>
    <name type="scientific">Bos taurus</name>
    <name type="common">Bovine</name>
    <dbReference type="NCBI Taxonomy" id="9913"/>
    <lineage>
        <taxon>Eukaryota</taxon>
        <taxon>Metazoa</taxon>
        <taxon>Chordata</taxon>
        <taxon>Craniata</taxon>
        <taxon>Vertebrata</taxon>
        <taxon>Euteleostomi</taxon>
        <taxon>Mammalia</taxon>
        <taxon>Eutheria</taxon>
        <taxon>Laurasiatheria</taxon>
        <taxon>Artiodactyla</taxon>
        <taxon>Ruminantia</taxon>
        <taxon>Pecora</taxon>
        <taxon>Bovidae</taxon>
        <taxon>Bovinae</taxon>
        <taxon>Bos</taxon>
    </lineage>
</organism>
<evidence type="ECO:0000250" key="1"/>
<evidence type="ECO:0000256" key="2">
    <source>
        <dbReference type="SAM" id="MobiDB-lite"/>
    </source>
</evidence>
<evidence type="ECO:0000305" key="3"/>
<keyword id="KW-0010">Activator</keyword>
<keyword id="KW-0539">Nucleus</keyword>
<keyword id="KW-1185">Reference proteome</keyword>
<keyword id="KW-0804">Transcription</keyword>
<keyword id="KW-0805">Transcription regulation</keyword>
<dbReference type="EMBL" id="BT021158">
    <property type="protein sequence ID" value="AAX31340.1"/>
    <property type="molecule type" value="mRNA"/>
</dbReference>
<dbReference type="RefSeq" id="NP_001029902.2">
    <property type="nucleotide sequence ID" value="NM_001034730.2"/>
</dbReference>
<dbReference type="SMR" id="Q5BIR6"/>
<dbReference type="FunCoup" id="Q5BIR6">
    <property type="interactions" value="5322"/>
</dbReference>
<dbReference type="STRING" id="9913.ENSBTAP00000004623"/>
<dbReference type="PaxDb" id="9913-ENSBTAP00000004623"/>
<dbReference type="Ensembl" id="ENSBTAT00000004623.5">
    <property type="protein sequence ID" value="ENSBTAP00000004623.4"/>
    <property type="gene ID" value="ENSBTAG00000003552.7"/>
</dbReference>
<dbReference type="GeneID" id="541303"/>
<dbReference type="KEGG" id="bta:541303"/>
<dbReference type="CTD" id="9440"/>
<dbReference type="VEuPathDB" id="HostDB:ENSBTAG00000003552"/>
<dbReference type="VGNC" id="VGNC:56273">
    <property type="gene designation" value="MED17"/>
</dbReference>
<dbReference type="eggNOG" id="KOG4512">
    <property type="taxonomic scope" value="Eukaryota"/>
</dbReference>
<dbReference type="GeneTree" id="ENSGT00390000011810"/>
<dbReference type="HOGENOM" id="CLU_028003_1_0_1"/>
<dbReference type="InParanoid" id="Q5BIR6"/>
<dbReference type="OMA" id="HMSYEPQ"/>
<dbReference type="OrthoDB" id="10058398at2759"/>
<dbReference type="TreeFam" id="TF323615"/>
<dbReference type="Reactome" id="R-BTA-212436">
    <property type="pathway name" value="Generic Transcription Pathway"/>
</dbReference>
<dbReference type="Reactome" id="R-BTA-9841922">
    <property type="pathway name" value="MLL4 and MLL3 complexes regulate expression of PPARG target genes in adipogenesis and hepatic steatosis"/>
</dbReference>
<dbReference type="Proteomes" id="UP000009136">
    <property type="component" value="Chromosome 29"/>
</dbReference>
<dbReference type="Bgee" id="ENSBTAG00000003552">
    <property type="expression patterns" value="Expressed in spiral colon and 109 other cell types or tissues"/>
</dbReference>
<dbReference type="GO" id="GO:0070847">
    <property type="term" value="C:core mediator complex"/>
    <property type="evidence" value="ECO:0000318"/>
    <property type="project" value="GO_Central"/>
</dbReference>
<dbReference type="GO" id="GO:0016592">
    <property type="term" value="C:mediator complex"/>
    <property type="evidence" value="ECO:0000318"/>
    <property type="project" value="GO_Central"/>
</dbReference>
<dbReference type="GO" id="GO:0046966">
    <property type="term" value="F:nuclear thyroid hormone receptor binding"/>
    <property type="evidence" value="ECO:0007669"/>
    <property type="project" value="Ensembl"/>
</dbReference>
<dbReference type="GO" id="GO:0003713">
    <property type="term" value="F:transcription coactivator activity"/>
    <property type="evidence" value="ECO:0007669"/>
    <property type="project" value="Ensembl"/>
</dbReference>
<dbReference type="GO" id="GO:0003712">
    <property type="term" value="F:transcription coregulator activity"/>
    <property type="evidence" value="ECO:0000318"/>
    <property type="project" value="GO_Central"/>
</dbReference>
<dbReference type="GO" id="GO:0060261">
    <property type="term" value="P:positive regulation of transcription initiation by RNA polymerase II"/>
    <property type="evidence" value="ECO:0007669"/>
    <property type="project" value="Ensembl"/>
</dbReference>
<dbReference type="GO" id="GO:0006357">
    <property type="term" value="P:regulation of transcription by RNA polymerase II"/>
    <property type="evidence" value="ECO:0000318"/>
    <property type="project" value="GO_Central"/>
</dbReference>
<dbReference type="GO" id="GO:0035019">
    <property type="term" value="P:somatic stem cell population maintenance"/>
    <property type="evidence" value="ECO:0007669"/>
    <property type="project" value="Ensembl"/>
</dbReference>
<dbReference type="InterPro" id="IPR019313">
    <property type="entry name" value="Mediator_Med17"/>
</dbReference>
<dbReference type="PANTHER" id="PTHR13114">
    <property type="entry name" value="MEDIATOR OF RNA POLYMERASE II TRANSCRIPTION SUBUNIT 17"/>
    <property type="match status" value="1"/>
</dbReference>
<dbReference type="PANTHER" id="PTHR13114:SF7">
    <property type="entry name" value="MEDIATOR OF RNA POLYMERASE II TRANSCRIPTION SUBUNIT 17"/>
    <property type="match status" value="1"/>
</dbReference>
<dbReference type="Pfam" id="PF10156">
    <property type="entry name" value="Med17"/>
    <property type="match status" value="1"/>
</dbReference>
<gene>
    <name type="primary">MED17</name>
    <name type="synonym">CRSP6</name>
</gene>
<feature type="chain" id="PRO_0000304699" description="Mediator of RNA polymerase II transcription subunit 17">
    <location>
        <begin position="1"/>
        <end position="651"/>
    </location>
</feature>
<feature type="region of interest" description="Disordered" evidence="2">
    <location>
        <begin position="51"/>
        <end position="83"/>
    </location>
</feature>
<feature type="compositionally biased region" description="Low complexity" evidence="2">
    <location>
        <begin position="62"/>
        <end position="74"/>
    </location>
</feature>
<comment type="function">
    <text evidence="1">Component of the Mediator complex, a coactivator involved in the regulated transcription of nearly all RNA polymerase II-dependent genes. Mediator functions as a bridge to convey information from gene-specific regulatory proteins to the basal RNA polymerase II transcription machinery. Mediator is recruited to promoters by direct interactions with regulatory proteins and serves as a scaffold for the assembly of a functional preinitiation complex with RNA polymerase II and the general transcription factors (By similarity).</text>
</comment>
<comment type="subunit">
    <text evidence="1">Component of the Mediator complex, which is composed of MED1, MED4, MED6, MED7, MED8, MED9, MED10, MED11, MED12, MED13, MED13L, MED14, MED15, MED16, MED17, MED18, MED19, MED20, MED21, MED22, MED23, MED24, MED25, MED26, MED27, MED29, MED30, MED31, CCNC, CDK8 and CDC2L6/CDK11. The MED12, MED13, CCNC and CDK8 subunits form a distinct module termed the CDK8 module. Mediator containing the CDK8 module is less active than Mediator lacking this module in supporting transcriptional activation. Individual preparations of the Mediator complex lacking one or more distinct subunits have been variously termed ARC, CRSP, DRIP, PC2, SMCC and TRAP. Interacts with GATA1, PPARG and STAT2 (By similarity).</text>
</comment>
<comment type="subcellular location">
    <subcellularLocation>
        <location evidence="3">Nucleus</location>
    </subcellularLocation>
</comment>
<comment type="similarity">
    <text evidence="3">Belongs to the Mediator complex subunit 17 family.</text>
</comment>
<proteinExistence type="evidence at transcript level"/>
<reference key="1">
    <citation type="journal article" date="2005" name="BMC Genomics">
        <title>Characterization of 954 bovine full-CDS cDNA sequences.</title>
        <authorList>
            <person name="Harhay G.P."/>
            <person name="Sonstegard T.S."/>
            <person name="Keele J.W."/>
            <person name="Heaton M.P."/>
            <person name="Clawson M.L."/>
            <person name="Snelling W.M."/>
            <person name="Wiedmann R.T."/>
            <person name="Van Tassell C.P."/>
            <person name="Smith T.P.L."/>
        </authorList>
    </citation>
    <scope>NUCLEOTIDE SEQUENCE [LARGE SCALE MRNA]</scope>
</reference>
<name>MED17_BOVIN</name>
<accession>Q5BIR6</accession>
<accession>Q3SYX5</accession>
<sequence length="651" mass="72737">MSGVRAVRISIESACEKQVQEVGLDGTETYLQPLSMSQNLARLAQRIDFSQGSGSEEEEAAGAEGDAQDWAGAGSSADQDDEEGLVKFQPSLWPWDSVRNNLRSALTEMCVLYDVLSIVRDKKFMTLDPVSQDALPPKQNPQTLQLISKKKSLAGAAQILLKGAERLTKSVTENQENKLQRDFNSELLRLRQHWKLRKVGDKILGDLSYRSAGSLFPHHGTFEVIKNTDIDLDKKIPEDYCPLDVQIPSDLEGSAYIRVSIQKQAPDIGDLGTVNLFKRPLPKSKPGSPHWQTKLEAAQNVLLCKEIFAQLSREAVQIKSQIPHIVVKNQIISQPFPSLQLSISLCHSSNDKKSPKSATEKQSPEDHLYVLEHNLHLLIREFHKQTLSSIMMPHPASAPFGHKRMRLSGPQAFDKNEINSIQSSEGLLEKIIKQAKHIFLRSRTAATIDSLASRIEDPQIQAHWSNINDVYESSVKVLITSQGYEQICKSIQLQLNIGVEQIRVVHRDGRVITLSHEGQELQDFLLSQMSQHQVHAVQQLAKVMGWQVLSFSNHVGLGPVESIGNASAITVASPNGDYAISVRNGPESGSKIMVQFPRNQCKDLPKSDVLQDSKWNHLRGPFKEVQWNKMEGRNFVYKMELLMSALSPCLL</sequence>